<proteinExistence type="inferred from homology"/>
<dbReference type="EC" id="2.8.1.8" evidence="1"/>
<dbReference type="EMBL" id="CP001150">
    <property type="protein sequence ID" value="ACM00949.1"/>
    <property type="molecule type" value="Genomic_DNA"/>
</dbReference>
<dbReference type="RefSeq" id="WP_002719936.1">
    <property type="nucleotide sequence ID" value="NC_011963.1"/>
</dbReference>
<dbReference type="SMR" id="B9KSE2"/>
<dbReference type="GeneID" id="67446519"/>
<dbReference type="KEGG" id="rsk:RSKD131_1089"/>
<dbReference type="HOGENOM" id="CLU_033144_2_1_5"/>
<dbReference type="UniPathway" id="UPA00538">
    <property type="reaction ID" value="UER00593"/>
</dbReference>
<dbReference type="GO" id="GO:0005737">
    <property type="term" value="C:cytoplasm"/>
    <property type="evidence" value="ECO:0007669"/>
    <property type="project" value="UniProtKB-SubCell"/>
</dbReference>
<dbReference type="GO" id="GO:0051539">
    <property type="term" value="F:4 iron, 4 sulfur cluster binding"/>
    <property type="evidence" value="ECO:0007669"/>
    <property type="project" value="UniProtKB-UniRule"/>
</dbReference>
<dbReference type="GO" id="GO:0016992">
    <property type="term" value="F:lipoate synthase activity"/>
    <property type="evidence" value="ECO:0007669"/>
    <property type="project" value="UniProtKB-UniRule"/>
</dbReference>
<dbReference type="GO" id="GO:0046872">
    <property type="term" value="F:metal ion binding"/>
    <property type="evidence" value="ECO:0007669"/>
    <property type="project" value="UniProtKB-KW"/>
</dbReference>
<dbReference type="FunFam" id="3.20.20.70:FF:000040">
    <property type="entry name" value="Lipoyl synthase"/>
    <property type="match status" value="1"/>
</dbReference>
<dbReference type="Gene3D" id="3.20.20.70">
    <property type="entry name" value="Aldolase class I"/>
    <property type="match status" value="1"/>
</dbReference>
<dbReference type="HAMAP" id="MF_00206">
    <property type="entry name" value="Lipoyl_synth"/>
    <property type="match status" value="1"/>
</dbReference>
<dbReference type="InterPro" id="IPR013785">
    <property type="entry name" value="Aldolase_TIM"/>
</dbReference>
<dbReference type="InterPro" id="IPR006638">
    <property type="entry name" value="Elp3/MiaA/NifB-like_rSAM"/>
</dbReference>
<dbReference type="InterPro" id="IPR031691">
    <property type="entry name" value="LIAS_N"/>
</dbReference>
<dbReference type="InterPro" id="IPR003698">
    <property type="entry name" value="Lipoyl_synth"/>
</dbReference>
<dbReference type="InterPro" id="IPR007197">
    <property type="entry name" value="rSAM"/>
</dbReference>
<dbReference type="NCBIfam" id="TIGR00510">
    <property type="entry name" value="lipA"/>
    <property type="match status" value="1"/>
</dbReference>
<dbReference type="NCBIfam" id="NF004019">
    <property type="entry name" value="PRK05481.1"/>
    <property type="match status" value="1"/>
</dbReference>
<dbReference type="NCBIfam" id="NF009544">
    <property type="entry name" value="PRK12928.1"/>
    <property type="match status" value="1"/>
</dbReference>
<dbReference type="PANTHER" id="PTHR10949">
    <property type="entry name" value="LIPOYL SYNTHASE"/>
    <property type="match status" value="1"/>
</dbReference>
<dbReference type="PANTHER" id="PTHR10949:SF0">
    <property type="entry name" value="LIPOYL SYNTHASE, MITOCHONDRIAL"/>
    <property type="match status" value="1"/>
</dbReference>
<dbReference type="Pfam" id="PF16881">
    <property type="entry name" value="LIAS_N"/>
    <property type="match status" value="1"/>
</dbReference>
<dbReference type="Pfam" id="PF04055">
    <property type="entry name" value="Radical_SAM"/>
    <property type="match status" value="1"/>
</dbReference>
<dbReference type="PIRSF" id="PIRSF005963">
    <property type="entry name" value="Lipoyl_synth"/>
    <property type="match status" value="1"/>
</dbReference>
<dbReference type="SFLD" id="SFLDF00271">
    <property type="entry name" value="lipoyl_synthase"/>
    <property type="match status" value="1"/>
</dbReference>
<dbReference type="SFLD" id="SFLDG01058">
    <property type="entry name" value="lipoyl_synthase_like"/>
    <property type="match status" value="1"/>
</dbReference>
<dbReference type="SMART" id="SM00729">
    <property type="entry name" value="Elp3"/>
    <property type="match status" value="1"/>
</dbReference>
<dbReference type="SUPFAM" id="SSF102114">
    <property type="entry name" value="Radical SAM enzymes"/>
    <property type="match status" value="1"/>
</dbReference>
<dbReference type="PROSITE" id="PS51918">
    <property type="entry name" value="RADICAL_SAM"/>
    <property type="match status" value="1"/>
</dbReference>
<accession>B9KSE2</accession>
<protein>
    <recommendedName>
        <fullName evidence="1">Lipoyl synthase</fullName>
        <ecNumber evidence="1">2.8.1.8</ecNumber>
    </recommendedName>
    <alternativeName>
        <fullName evidence="1">Lip-syn</fullName>
        <shortName evidence="1">LS</shortName>
    </alternativeName>
    <alternativeName>
        <fullName evidence="1">Lipoate synthase</fullName>
    </alternativeName>
    <alternativeName>
        <fullName evidence="1">Lipoic acid synthase</fullName>
    </alternativeName>
    <alternativeName>
        <fullName evidence="1">Sulfur insertion protein LipA</fullName>
    </alternativeName>
</protein>
<comment type="function">
    <text evidence="1">Catalyzes the radical-mediated insertion of two sulfur atoms into the C-6 and C-8 positions of the octanoyl moiety bound to the lipoyl domains of lipoate-dependent enzymes, thereby converting the octanoylated domains into lipoylated derivatives.</text>
</comment>
<comment type="catalytic activity">
    <reaction evidence="1">
        <text>[[Fe-S] cluster scaffold protein carrying a second [4Fe-4S](2+) cluster] + N(6)-octanoyl-L-lysyl-[protein] + 2 oxidized [2Fe-2S]-[ferredoxin] + 2 S-adenosyl-L-methionine + 4 H(+) = [[Fe-S] cluster scaffold protein] + N(6)-[(R)-dihydrolipoyl]-L-lysyl-[protein] + 4 Fe(3+) + 2 hydrogen sulfide + 2 5'-deoxyadenosine + 2 L-methionine + 2 reduced [2Fe-2S]-[ferredoxin]</text>
        <dbReference type="Rhea" id="RHEA:16585"/>
        <dbReference type="Rhea" id="RHEA-COMP:9928"/>
        <dbReference type="Rhea" id="RHEA-COMP:10000"/>
        <dbReference type="Rhea" id="RHEA-COMP:10001"/>
        <dbReference type="Rhea" id="RHEA-COMP:10475"/>
        <dbReference type="Rhea" id="RHEA-COMP:14568"/>
        <dbReference type="Rhea" id="RHEA-COMP:14569"/>
        <dbReference type="ChEBI" id="CHEBI:15378"/>
        <dbReference type="ChEBI" id="CHEBI:17319"/>
        <dbReference type="ChEBI" id="CHEBI:29034"/>
        <dbReference type="ChEBI" id="CHEBI:29919"/>
        <dbReference type="ChEBI" id="CHEBI:33722"/>
        <dbReference type="ChEBI" id="CHEBI:33737"/>
        <dbReference type="ChEBI" id="CHEBI:33738"/>
        <dbReference type="ChEBI" id="CHEBI:57844"/>
        <dbReference type="ChEBI" id="CHEBI:59789"/>
        <dbReference type="ChEBI" id="CHEBI:78809"/>
        <dbReference type="ChEBI" id="CHEBI:83100"/>
        <dbReference type="EC" id="2.8.1.8"/>
    </reaction>
</comment>
<comment type="cofactor">
    <cofactor evidence="1">
        <name>[4Fe-4S] cluster</name>
        <dbReference type="ChEBI" id="CHEBI:49883"/>
    </cofactor>
    <text evidence="1">Binds 2 [4Fe-4S] clusters per subunit. One cluster is coordinated with 3 cysteines and an exchangeable S-adenosyl-L-methionine.</text>
</comment>
<comment type="pathway">
    <text evidence="1">Protein modification; protein lipoylation via endogenous pathway; protein N(6)-(lipoyl)lysine from octanoyl-[acyl-carrier-protein]: step 2/2.</text>
</comment>
<comment type="subcellular location">
    <subcellularLocation>
        <location evidence="1">Cytoplasm</location>
    </subcellularLocation>
</comment>
<comment type="similarity">
    <text evidence="1">Belongs to the radical SAM superfamily. Lipoyl synthase family.</text>
</comment>
<reference key="1">
    <citation type="journal article" date="2009" name="J. Bacteriol.">
        <title>Complete genome sequence of Rhodobacter sphaeroides KD131.</title>
        <authorList>
            <person name="Lim S.-K."/>
            <person name="Kim S.J."/>
            <person name="Cha S.H."/>
            <person name="Oh Y.-K."/>
            <person name="Rhee H.-J."/>
            <person name="Kim M.-S."/>
            <person name="Lee J.K."/>
        </authorList>
    </citation>
    <scope>NUCLEOTIDE SEQUENCE [LARGE SCALE GENOMIC DNA]</scope>
    <source>
        <strain>KD131 / KCTC 12085</strain>
    </source>
</reference>
<keyword id="KW-0004">4Fe-4S</keyword>
<keyword id="KW-0963">Cytoplasm</keyword>
<keyword id="KW-0408">Iron</keyword>
<keyword id="KW-0411">Iron-sulfur</keyword>
<keyword id="KW-0479">Metal-binding</keyword>
<keyword id="KW-0949">S-adenosyl-L-methionine</keyword>
<keyword id="KW-0808">Transferase</keyword>
<evidence type="ECO:0000255" key="1">
    <source>
        <dbReference type="HAMAP-Rule" id="MF_00206"/>
    </source>
</evidence>
<evidence type="ECO:0000255" key="2">
    <source>
        <dbReference type="PROSITE-ProRule" id="PRU01266"/>
    </source>
</evidence>
<evidence type="ECO:0000256" key="3">
    <source>
        <dbReference type="SAM" id="MobiDB-lite"/>
    </source>
</evidence>
<feature type="chain" id="PRO_1000124643" description="Lipoyl synthase">
    <location>
        <begin position="1"/>
        <end position="320"/>
    </location>
</feature>
<feature type="domain" description="Radical SAM core" evidence="2">
    <location>
        <begin position="72"/>
        <end position="289"/>
    </location>
</feature>
<feature type="region of interest" description="Disordered" evidence="3">
    <location>
        <begin position="1"/>
        <end position="30"/>
    </location>
</feature>
<feature type="compositionally biased region" description="Basic and acidic residues" evidence="3">
    <location>
        <begin position="1"/>
        <end position="24"/>
    </location>
</feature>
<feature type="binding site" evidence="1">
    <location>
        <position position="60"/>
    </location>
    <ligand>
        <name>[4Fe-4S] cluster</name>
        <dbReference type="ChEBI" id="CHEBI:49883"/>
        <label>1</label>
    </ligand>
</feature>
<feature type="binding site" evidence="1">
    <location>
        <position position="65"/>
    </location>
    <ligand>
        <name>[4Fe-4S] cluster</name>
        <dbReference type="ChEBI" id="CHEBI:49883"/>
        <label>1</label>
    </ligand>
</feature>
<feature type="binding site" evidence="1">
    <location>
        <position position="71"/>
    </location>
    <ligand>
        <name>[4Fe-4S] cluster</name>
        <dbReference type="ChEBI" id="CHEBI:49883"/>
        <label>1</label>
    </ligand>
</feature>
<feature type="binding site" evidence="1">
    <location>
        <position position="86"/>
    </location>
    <ligand>
        <name>[4Fe-4S] cluster</name>
        <dbReference type="ChEBI" id="CHEBI:49883"/>
        <label>2</label>
        <note>4Fe-4S-S-AdoMet</note>
    </ligand>
</feature>
<feature type="binding site" evidence="1">
    <location>
        <position position="90"/>
    </location>
    <ligand>
        <name>[4Fe-4S] cluster</name>
        <dbReference type="ChEBI" id="CHEBI:49883"/>
        <label>2</label>
        <note>4Fe-4S-S-AdoMet</note>
    </ligand>
</feature>
<feature type="binding site" evidence="1">
    <location>
        <position position="93"/>
    </location>
    <ligand>
        <name>[4Fe-4S] cluster</name>
        <dbReference type="ChEBI" id="CHEBI:49883"/>
        <label>2</label>
        <note>4Fe-4S-S-AdoMet</note>
    </ligand>
</feature>
<feature type="binding site" evidence="1">
    <location>
        <position position="300"/>
    </location>
    <ligand>
        <name>[4Fe-4S] cluster</name>
        <dbReference type="ChEBI" id="CHEBI:49883"/>
        <label>1</label>
    </ligand>
</feature>
<organism>
    <name type="scientific">Cereibacter sphaeroides (strain KD131 / KCTC 12085)</name>
    <name type="common">Rhodobacter sphaeroides</name>
    <dbReference type="NCBI Taxonomy" id="557760"/>
    <lineage>
        <taxon>Bacteria</taxon>
        <taxon>Pseudomonadati</taxon>
        <taxon>Pseudomonadota</taxon>
        <taxon>Alphaproteobacteria</taxon>
        <taxon>Rhodobacterales</taxon>
        <taxon>Paracoccaceae</taxon>
        <taxon>Cereibacter</taxon>
    </lineage>
</organism>
<gene>
    <name evidence="1" type="primary">lipA</name>
    <name type="ordered locus">RSKD131_1089</name>
</gene>
<name>LIPA_CERSK</name>
<sequence>MIGKLVRDLKIPDQRHPEKAHRPDNVQPKKPSWIRVKAPTSEGYKETRDIIRGQKLATVCEEAGCPNVGECWSQGHATMMIMGEICTRGCSFCNVATGRPQALDAFEPGRVAHAVSQLGLKHVVVTSVDRDDLEDGGAEHFAQTIRAIRHRAPATTIEVLVPDFLKCGPSALETVVAARPDVFNHNLETVPGLYPEVRPGARYFHSLRLLQRAKELDPSIFTKSGIMVGLGEDRQGVLQVMDDMRSAEVDFLTIGQYLQPTPKHHRVDRFVTPEEFAGYEKAAYGKGFLMVSATPLTRSSYHAGDDFARLRDARQKRLGA</sequence>